<accession>Q2NZS1</accession>
<gene>
    <name evidence="2" type="primary">tal</name>
    <name type="ordered locus">XOO3451</name>
</gene>
<feature type="chain" id="PRO_0000230980" description="Transaldolase">
    <location>
        <begin position="1"/>
        <end position="322"/>
    </location>
</feature>
<feature type="active site" description="Schiff-base intermediate with substrate" evidence="2">
    <location>
        <position position="136"/>
    </location>
</feature>
<proteinExistence type="inferred from homology"/>
<organism>
    <name type="scientific">Xanthomonas oryzae pv. oryzae (strain MAFF 311018)</name>
    <dbReference type="NCBI Taxonomy" id="342109"/>
    <lineage>
        <taxon>Bacteria</taxon>
        <taxon>Pseudomonadati</taxon>
        <taxon>Pseudomonadota</taxon>
        <taxon>Gammaproteobacteria</taxon>
        <taxon>Lysobacterales</taxon>
        <taxon>Lysobacteraceae</taxon>
        <taxon>Xanthomonas</taxon>
    </lineage>
</organism>
<keyword id="KW-0963">Cytoplasm</keyword>
<keyword id="KW-0570">Pentose shunt</keyword>
<keyword id="KW-0704">Schiff base</keyword>
<keyword id="KW-0808">Transferase</keyword>
<reference key="1">
    <citation type="journal article" date="2005" name="Jpn. Agric. Res. Q.">
        <title>Genome sequence of Xanthomonas oryzae pv. oryzae suggests contribution of large numbers of effector genes and insertion sequences to its race diversity.</title>
        <authorList>
            <person name="Ochiai H."/>
            <person name="Inoue Y."/>
            <person name="Takeya M."/>
            <person name="Sasaki A."/>
            <person name="Kaku H."/>
        </authorList>
    </citation>
    <scope>NUCLEOTIDE SEQUENCE [LARGE SCALE GENOMIC DNA]</scope>
    <source>
        <strain>MAFF 311018</strain>
    </source>
</reference>
<evidence type="ECO:0000250" key="1"/>
<evidence type="ECO:0000255" key="2">
    <source>
        <dbReference type="HAMAP-Rule" id="MF_00492"/>
    </source>
</evidence>
<dbReference type="EC" id="2.2.1.2" evidence="2"/>
<dbReference type="EMBL" id="AP008229">
    <property type="protein sequence ID" value="BAE70206.1"/>
    <property type="molecule type" value="Genomic_DNA"/>
</dbReference>
<dbReference type="RefSeq" id="WP_011409285.1">
    <property type="nucleotide sequence ID" value="NC_007705.1"/>
</dbReference>
<dbReference type="SMR" id="Q2NZS1"/>
<dbReference type="KEGG" id="xom:XOO3451"/>
<dbReference type="HOGENOM" id="CLU_047470_0_1_6"/>
<dbReference type="UniPathway" id="UPA00115">
    <property type="reaction ID" value="UER00414"/>
</dbReference>
<dbReference type="GO" id="GO:0005829">
    <property type="term" value="C:cytosol"/>
    <property type="evidence" value="ECO:0007669"/>
    <property type="project" value="TreeGrafter"/>
</dbReference>
<dbReference type="GO" id="GO:0004801">
    <property type="term" value="F:transaldolase activity"/>
    <property type="evidence" value="ECO:0000250"/>
    <property type="project" value="UniProtKB"/>
</dbReference>
<dbReference type="GO" id="GO:0005975">
    <property type="term" value="P:carbohydrate metabolic process"/>
    <property type="evidence" value="ECO:0007669"/>
    <property type="project" value="InterPro"/>
</dbReference>
<dbReference type="GO" id="GO:0006098">
    <property type="term" value="P:pentose-phosphate shunt"/>
    <property type="evidence" value="ECO:0007669"/>
    <property type="project" value="UniProtKB-UniRule"/>
</dbReference>
<dbReference type="CDD" id="cd00957">
    <property type="entry name" value="Transaldolase_TalAB"/>
    <property type="match status" value="1"/>
</dbReference>
<dbReference type="FunFam" id="3.20.20.70:FF:000226">
    <property type="entry name" value="Transaldolase"/>
    <property type="match status" value="1"/>
</dbReference>
<dbReference type="Gene3D" id="3.20.20.70">
    <property type="entry name" value="Aldolase class I"/>
    <property type="match status" value="1"/>
</dbReference>
<dbReference type="HAMAP" id="MF_00492">
    <property type="entry name" value="Transaldolase_1"/>
    <property type="match status" value="1"/>
</dbReference>
<dbReference type="InterPro" id="IPR013785">
    <property type="entry name" value="Aldolase_TIM"/>
</dbReference>
<dbReference type="InterPro" id="IPR001585">
    <property type="entry name" value="TAL/FSA"/>
</dbReference>
<dbReference type="InterPro" id="IPR004730">
    <property type="entry name" value="Transaldolase_1"/>
</dbReference>
<dbReference type="InterPro" id="IPR018225">
    <property type="entry name" value="Transaldolase_AS"/>
</dbReference>
<dbReference type="PANTHER" id="PTHR10683">
    <property type="entry name" value="TRANSALDOLASE"/>
    <property type="match status" value="1"/>
</dbReference>
<dbReference type="PANTHER" id="PTHR10683:SF18">
    <property type="entry name" value="TRANSALDOLASE"/>
    <property type="match status" value="1"/>
</dbReference>
<dbReference type="Pfam" id="PF00923">
    <property type="entry name" value="TAL_FSA"/>
    <property type="match status" value="1"/>
</dbReference>
<dbReference type="SUPFAM" id="SSF51569">
    <property type="entry name" value="Aldolase"/>
    <property type="match status" value="1"/>
</dbReference>
<dbReference type="PROSITE" id="PS01054">
    <property type="entry name" value="TRANSALDOLASE_1"/>
    <property type="match status" value="1"/>
</dbReference>
<dbReference type="PROSITE" id="PS00958">
    <property type="entry name" value="TRANSALDOLASE_2"/>
    <property type="match status" value="1"/>
</dbReference>
<protein>
    <recommendedName>
        <fullName evidence="2">Transaldolase</fullName>
        <ecNumber evidence="2">2.2.1.2</ecNumber>
    </recommendedName>
</protein>
<name>TAL_XANOM</name>
<sequence>MTASPSKLAQLRELSVVVADTGDYDAIKRLQPVDCTTNPTLVKKALDLPVYADLLERELAWGRAHGGDDRTTTVDEVADRLTIGVGVKLSALVPGRVSTEVDADLAHDTQATIAKARKFVAMYAERGVPKDKILIKIAATWEGIEAARQLQLEGIDCNLTLIFNRAQALACAEANVFLISPFVGRILDYYVAQGQTPASIDEDPGVVFVRTVYNAFKQRGSSTVVMGASFRSTAQIEALAGCDRLTISPDLLEKLDAEHGELPRKLSPGNANNAQITPIDSDSFASGLAADPMATEKLVSGIDTFAKDLHALRKTIADKLAG</sequence>
<comment type="function">
    <text evidence="2">Transaldolase is important for the balance of metabolites in the pentose-phosphate pathway.</text>
</comment>
<comment type="catalytic activity">
    <reaction evidence="2">
        <text>D-sedoheptulose 7-phosphate + D-glyceraldehyde 3-phosphate = D-erythrose 4-phosphate + beta-D-fructose 6-phosphate</text>
        <dbReference type="Rhea" id="RHEA:17053"/>
        <dbReference type="ChEBI" id="CHEBI:16897"/>
        <dbReference type="ChEBI" id="CHEBI:57483"/>
        <dbReference type="ChEBI" id="CHEBI:57634"/>
        <dbReference type="ChEBI" id="CHEBI:59776"/>
        <dbReference type="EC" id="2.2.1.2"/>
    </reaction>
</comment>
<comment type="pathway">
    <text evidence="2">Carbohydrate degradation; pentose phosphate pathway; D-glyceraldehyde 3-phosphate and beta-D-fructose 6-phosphate from D-ribose 5-phosphate and D-xylulose 5-phosphate (non-oxidative stage): step 2/3.</text>
</comment>
<comment type="subunit">
    <text evidence="1">Homodimer.</text>
</comment>
<comment type="subcellular location">
    <subcellularLocation>
        <location evidence="2">Cytoplasm</location>
    </subcellularLocation>
</comment>
<comment type="similarity">
    <text evidence="2">Belongs to the transaldolase family. Type 1 subfamily.</text>
</comment>